<keyword id="KW-0067">ATP-binding</keyword>
<keyword id="KW-0460">Magnesium</keyword>
<keyword id="KW-0479">Metal-binding</keyword>
<keyword id="KW-0547">Nucleotide-binding</keyword>
<keyword id="KW-0548">Nucleotidyltransferase</keyword>
<keyword id="KW-1185">Reference proteome</keyword>
<keyword id="KW-0692">RNA repair</keyword>
<keyword id="KW-0694">RNA-binding</keyword>
<keyword id="KW-0808">Transferase</keyword>
<keyword id="KW-0819">tRNA processing</keyword>
<reference key="1">
    <citation type="journal article" date="2005" name="Proc. Natl. Acad. Sci. U.S.A.">
        <title>Whole genome sequence of Staphylococcus saprophyticus reveals the pathogenesis of uncomplicated urinary tract infection.</title>
        <authorList>
            <person name="Kuroda M."/>
            <person name="Yamashita A."/>
            <person name="Hirakawa H."/>
            <person name="Kumano M."/>
            <person name="Morikawa K."/>
            <person name="Higashide M."/>
            <person name="Maruyama A."/>
            <person name="Inose Y."/>
            <person name="Matoba K."/>
            <person name="Toh H."/>
            <person name="Kuhara S."/>
            <person name="Hattori M."/>
            <person name="Ohta T."/>
        </authorList>
    </citation>
    <scope>NUCLEOTIDE SEQUENCE [LARGE SCALE GENOMIC DNA]</scope>
    <source>
        <strain>ATCC 15305 / DSM 20229 / NCIMB 8711 / NCTC 7292 / S-41</strain>
    </source>
</reference>
<evidence type="ECO:0000255" key="1">
    <source>
        <dbReference type="HAMAP-Rule" id="MF_01263"/>
    </source>
</evidence>
<proteinExistence type="inferred from homology"/>
<name>CCA_STAS1</name>
<sequence>MTNSLFETAKPILEKLQAHHFQAYFVGGSVRDYLMNRPIHDIDITTSATPDEIETVFDKTIPIGREHGTINVIYKGEQYEVTTFRSEGDYDDHRRPNEVFFVRNLYDDVQRRDFTMNAIAMDINYQIFDYFEGQQDIKHQLIRTVGNPDERFDEDALRIIRGLRFQSQFGFHLEEATFTAMLNHIADIKYLAIERIVVELKKLTNGDFVSKSFNNLKHFMAFKYIPFFKHYDITKFTLRNAMPFTTFVAFLISQQREIDANIADLKVSNNEKKRIKTLVQLIDQIDEVQTKSQLKLFVYDYGKKDILEVLSYLDELKRNRITSISPLIVNDQTVTEVAKQLPMLSRSEMDINGKDILEIANKKSGPWLKETLREVEYAIISGEVVNFKPELKKWVKTRV</sequence>
<feature type="chain" id="PRO_1000054336" description="CCA-adding enzyme">
    <location>
        <begin position="1"/>
        <end position="399"/>
    </location>
</feature>
<feature type="binding site" evidence="1">
    <location>
        <position position="28"/>
    </location>
    <ligand>
        <name>ATP</name>
        <dbReference type="ChEBI" id="CHEBI:30616"/>
    </ligand>
</feature>
<feature type="binding site" evidence="1">
    <location>
        <position position="28"/>
    </location>
    <ligand>
        <name>CTP</name>
        <dbReference type="ChEBI" id="CHEBI:37563"/>
    </ligand>
</feature>
<feature type="binding site" evidence="1">
    <location>
        <position position="31"/>
    </location>
    <ligand>
        <name>ATP</name>
        <dbReference type="ChEBI" id="CHEBI:30616"/>
    </ligand>
</feature>
<feature type="binding site" evidence="1">
    <location>
        <position position="31"/>
    </location>
    <ligand>
        <name>CTP</name>
        <dbReference type="ChEBI" id="CHEBI:37563"/>
    </ligand>
</feature>
<feature type="binding site" evidence="1">
    <location>
        <position position="41"/>
    </location>
    <ligand>
        <name>Mg(2+)</name>
        <dbReference type="ChEBI" id="CHEBI:18420"/>
    </ligand>
</feature>
<feature type="binding site" evidence="1">
    <location>
        <position position="43"/>
    </location>
    <ligand>
        <name>Mg(2+)</name>
        <dbReference type="ChEBI" id="CHEBI:18420"/>
    </ligand>
</feature>
<feature type="binding site" evidence="1">
    <location>
        <position position="112"/>
    </location>
    <ligand>
        <name>ATP</name>
        <dbReference type="ChEBI" id="CHEBI:30616"/>
    </ligand>
</feature>
<feature type="binding site" evidence="1">
    <location>
        <position position="112"/>
    </location>
    <ligand>
        <name>CTP</name>
        <dbReference type="ChEBI" id="CHEBI:37563"/>
    </ligand>
</feature>
<feature type="binding site" evidence="1">
    <location>
        <position position="155"/>
    </location>
    <ligand>
        <name>ATP</name>
        <dbReference type="ChEBI" id="CHEBI:30616"/>
    </ligand>
</feature>
<feature type="binding site" evidence="1">
    <location>
        <position position="155"/>
    </location>
    <ligand>
        <name>CTP</name>
        <dbReference type="ChEBI" id="CHEBI:37563"/>
    </ligand>
</feature>
<feature type="binding site" evidence="1">
    <location>
        <position position="158"/>
    </location>
    <ligand>
        <name>ATP</name>
        <dbReference type="ChEBI" id="CHEBI:30616"/>
    </ligand>
</feature>
<feature type="binding site" evidence="1">
    <location>
        <position position="158"/>
    </location>
    <ligand>
        <name>CTP</name>
        <dbReference type="ChEBI" id="CHEBI:37563"/>
    </ligand>
</feature>
<feature type="binding site" evidence="1">
    <location>
        <position position="161"/>
    </location>
    <ligand>
        <name>ATP</name>
        <dbReference type="ChEBI" id="CHEBI:30616"/>
    </ligand>
</feature>
<feature type="binding site" evidence="1">
    <location>
        <position position="161"/>
    </location>
    <ligand>
        <name>CTP</name>
        <dbReference type="ChEBI" id="CHEBI:37563"/>
    </ligand>
</feature>
<feature type="binding site" evidence="1">
    <location>
        <position position="164"/>
    </location>
    <ligand>
        <name>ATP</name>
        <dbReference type="ChEBI" id="CHEBI:30616"/>
    </ligand>
</feature>
<feature type="binding site" evidence="1">
    <location>
        <position position="164"/>
    </location>
    <ligand>
        <name>CTP</name>
        <dbReference type="ChEBI" id="CHEBI:37563"/>
    </ligand>
</feature>
<dbReference type="EC" id="2.7.7.72" evidence="1"/>
<dbReference type="EMBL" id="AP008934">
    <property type="protein sequence ID" value="BAE18432.1"/>
    <property type="molecule type" value="Genomic_DNA"/>
</dbReference>
<dbReference type="RefSeq" id="WP_011303077.1">
    <property type="nucleotide sequence ID" value="NC_007350.1"/>
</dbReference>
<dbReference type="SMR" id="Q49XR3"/>
<dbReference type="GeneID" id="3616527"/>
<dbReference type="KEGG" id="ssp:SSP1287"/>
<dbReference type="PATRIC" id="fig|342451.11.peg.1289"/>
<dbReference type="eggNOG" id="COG0617">
    <property type="taxonomic scope" value="Bacteria"/>
</dbReference>
<dbReference type="HOGENOM" id="CLU_015961_3_0_9"/>
<dbReference type="OrthoDB" id="9805698at2"/>
<dbReference type="Proteomes" id="UP000006371">
    <property type="component" value="Chromosome"/>
</dbReference>
<dbReference type="GO" id="GO:0005524">
    <property type="term" value="F:ATP binding"/>
    <property type="evidence" value="ECO:0007669"/>
    <property type="project" value="UniProtKB-UniRule"/>
</dbReference>
<dbReference type="GO" id="GO:0004810">
    <property type="term" value="F:CCA tRNA nucleotidyltransferase activity"/>
    <property type="evidence" value="ECO:0007669"/>
    <property type="project" value="UniProtKB-UniRule"/>
</dbReference>
<dbReference type="GO" id="GO:0000287">
    <property type="term" value="F:magnesium ion binding"/>
    <property type="evidence" value="ECO:0007669"/>
    <property type="project" value="UniProtKB-UniRule"/>
</dbReference>
<dbReference type="GO" id="GO:0000049">
    <property type="term" value="F:tRNA binding"/>
    <property type="evidence" value="ECO:0007669"/>
    <property type="project" value="UniProtKB-UniRule"/>
</dbReference>
<dbReference type="GO" id="GO:0042245">
    <property type="term" value="P:RNA repair"/>
    <property type="evidence" value="ECO:0007669"/>
    <property type="project" value="UniProtKB-KW"/>
</dbReference>
<dbReference type="GO" id="GO:0001680">
    <property type="term" value="P:tRNA 3'-terminal CCA addition"/>
    <property type="evidence" value="ECO:0007669"/>
    <property type="project" value="UniProtKB-UniRule"/>
</dbReference>
<dbReference type="CDD" id="cd05398">
    <property type="entry name" value="NT_ClassII-CCAase"/>
    <property type="match status" value="1"/>
</dbReference>
<dbReference type="Gene3D" id="1.10.246.80">
    <property type="match status" value="1"/>
</dbReference>
<dbReference type="Gene3D" id="3.30.460.10">
    <property type="entry name" value="Beta Polymerase, domain 2"/>
    <property type="match status" value="1"/>
</dbReference>
<dbReference type="Gene3D" id="1.10.3090.10">
    <property type="entry name" value="cca-adding enzyme, domain 2"/>
    <property type="match status" value="1"/>
</dbReference>
<dbReference type="HAMAP" id="MF_01263">
    <property type="entry name" value="CCA_bact_type3"/>
    <property type="match status" value="1"/>
</dbReference>
<dbReference type="InterPro" id="IPR050264">
    <property type="entry name" value="Bact_CCA-adding_enz_type3_sf"/>
</dbReference>
<dbReference type="InterPro" id="IPR032810">
    <property type="entry name" value="CCA-adding_enz_C"/>
</dbReference>
<dbReference type="InterPro" id="IPR023068">
    <property type="entry name" value="CCA-adding_enz_firmicutes"/>
</dbReference>
<dbReference type="InterPro" id="IPR043519">
    <property type="entry name" value="NT_sf"/>
</dbReference>
<dbReference type="InterPro" id="IPR002646">
    <property type="entry name" value="PolA_pol_head_dom"/>
</dbReference>
<dbReference type="InterPro" id="IPR032828">
    <property type="entry name" value="PolyA_RNA-bd"/>
</dbReference>
<dbReference type="NCBIfam" id="NF009814">
    <property type="entry name" value="PRK13299.1"/>
    <property type="match status" value="1"/>
</dbReference>
<dbReference type="PANTHER" id="PTHR46173">
    <property type="entry name" value="CCA TRNA NUCLEOTIDYLTRANSFERASE 1, MITOCHONDRIAL"/>
    <property type="match status" value="1"/>
</dbReference>
<dbReference type="PANTHER" id="PTHR46173:SF1">
    <property type="entry name" value="CCA TRNA NUCLEOTIDYLTRANSFERASE 1, MITOCHONDRIAL"/>
    <property type="match status" value="1"/>
</dbReference>
<dbReference type="Pfam" id="PF01743">
    <property type="entry name" value="PolyA_pol"/>
    <property type="match status" value="1"/>
</dbReference>
<dbReference type="Pfam" id="PF12627">
    <property type="entry name" value="PolyA_pol_RNAbd"/>
    <property type="match status" value="1"/>
</dbReference>
<dbReference type="Pfam" id="PF13735">
    <property type="entry name" value="tRNA_NucTran2_2"/>
    <property type="match status" value="1"/>
</dbReference>
<dbReference type="SUPFAM" id="SSF81301">
    <property type="entry name" value="Nucleotidyltransferase"/>
    <property type="match status" value="1"/>
</dbReference>
<dbReference type="SUPFAM" id="SSF81891">
    <property type="entry name" value="Poly A polymerase C-terminal region-like"/>
    <property type="match status" value="1"/>
</dbReference>
<organism>
    <name type="scientific">Staphylococcus saprophyticus subsp. saprophyticus (strain ATCC 15305 / DSM 20229 / NCIMB 8711 / NCTC 7292 / S-41)</name>
    <dbReference type="NCBI Taxonomy" id="342451"/>
    <lineage>
        <taxon>Bacteria</taxon>
        <taxon>Bacillati</taxon>
        <taxon>Bacillota</taxon>
        <taxon>Bacilli</taxon>
        <taxon>Bacillales</taxon>
        <taxon>Staphylococcaceae</taxon>
        <taxon>Staphylococcus</taxon>
    </lineage>
</organism>
<accession>Q49XR3</accession>
<gene>
    <name evidence="1" type="primary">cca</name>
    <name type="ordered locus">SSP1287</name>
</gene>
<comment type="function">
    <text evidence="1">Catalyzes the addition and repair of the essential 3'-terminal CCA sequence in tRNAs without using a nucleic acid template. Adds these three nucleotides in the order of C, C, and A to the tRNA nucleotide-73, using CTP and ATP as substrates and producing inorganic pyrophosphate. tRNA 3'-terminal CCA addition is required both for tRNA processing and repair. Also involved in tRNA surveillance by mediating tandem CCA addition to generate a CCACCA at the 3' terminus of unstable tRNAs. While stable tRNAs receive only 3'-terminal CCA, unstable tRNAs are marked with CCACCA and rapidly degraded.</text>
</comment>
<comment type="catalytic activity">
    <reaction evidence="1">
        <text>a tRNA precursor + 2 CTP + ATP = a tRNA with a 3' CCA end + 3 diphosphate</text>
        <dbReference type="Rhea" id="RHEA:14433"/>
        <dbReference type="Rhea" id="RHEA-COMP:10465"/>
        <dbReference type="Rhea" id="RHEA-COMP:10468"/>
        <dbReference type="ChEBI" id="CHEBI:30616"/>
        <dbReference type="ChEBI" id="CHEBI:33019"/>
        <dbReference type="ChEBI" id="CHEBI:37563"/>
        <dbReference type="ChEBI" id="CHEBI:74896"/>
        <dbReference type="ChEBI" id="CHEBI:83071"/>
        <dbReference type="EC" id="2.7.7.72"/>
    </reaction>
</comment>
<comment type="catalytic activity">
    <reaction evidence="1">
        <text>a tRNA with a 3' CCA end + 2 CTP + ATP = a tRNA with a 3' CCACCA end + 3 diphosphate</text>
        <dbReference type="Rhea" id="RHEA:76235"/>
        <dbReference type="Rhea" id="RHEA-COMP:10468"/>
        <dbReference type="Rhea" id="RHEA-COMP:18655"/>
        <dbReference type="ChEBI" id="CHEBI:30616"/>
        <dbReference type="ChEBI" id="CHEBI:33019"/>
        <dbReference type="ChEBI" id="CHEBI:37563"/>
        <dbReference type="ChEBI" id="CHEBI:83071"/>
        <dbReference type="ChEBI" id="CHEBI:195187"/>
    </reaction>
    <physiologicalReaction direction="left-to-right" evidence="1">
        <dbReference type="Rhea" id="RHEA:76236"/>
    </physiologicalReaction>
</comment>
<comment type="cofactor">
    <cofactor evidence="1">
        <name>Mg(2+)</name>
        <dbReference type="ChEBI" id="CHEBI:18420"/>
    </cofactor>
</comment>
<comment type="subunit">
    <text evidence="1">Homodimer.</text>
</comment>
<comment type="miscellaneous">
    <text evidence="1">A single active site specifically recognizes both ATP and CTP and is responsible for their addition.</text>
</comment>
<comment type="similarity">
    <text evidence="1">Belongs to the tRNA nucleotidyltransferase/poly(A) polymerase family. Bacterial CCA-adding enzyme type 3 subfamily.</text>
</comment>
<protein>
    <recommendedName>
        <fullName evidence="1">CCA-adding enzyme</fullName>
        <ecNumber evidence="1">2.7.7.72</ecNumber>
    </recommendedName>
    <alternativeName>
        <fullName evidence="1">CCA tRNA nucleotidyltransferase</fullName>
    </alternativeName>
    <alternativeName>
        <fullName evidence="1">tRNA CCA-pyrophosphorylase</fullName>
    </alternativeName>
    <alternativeName>
        <fullName evidence="1">tRNA adenylyl-/cytidylyl- transferase</fullName>
    </alternativeName>
    <alternativeName>
        <fullName evidence="1">tRNA nucleotidyltransferase</fullName>
    </alternativeName>
    <alternativeName>
        <fullName evidence="1">tRNA-NT</fullName>
    </alternativeName>
</protein>